<dbReference type="EMBL" id="AY521628">
    <property type="protein sequence ID" value="AAS09955.1"/>
    <property type="molecule type" value="mRNA"/>
</dbReference>
<dbReference type="EMBL" id="AY549443">
    <property type="protein sequence ID" value="AAT42265.1"/>
    <property type="molecule type" value="mRNA"/>
</dbReference>
<dbReference type="SMR" id="Q6QZN6"/>
<dbReference type="FunCoup" id="Q6QZN6">
    <property type="interactions" value="1597"/>
</dbReference>
<dbReference type="IntAct" id="Q6QZN6">
    <property type="interactions" value="1"/>
</dbReference>
<dbReference type="STRING" id="7955.ENSDARP00000133221"/>
<dbReference type="PaxDb" id="7955-ENSDARP00000058000"/>
<dbReference type="AGR" id="ZFIN:ZDB-GENE-040623-3"/>
<dbReference type="ZFIN" id="ZDB-GENE-040623-3">
    <property type="gene designation" value="dact1"/>
</dbReference>
<dbReference type="eggNOG" id="ENOG502QVXB">
    <property type="taxonomic scope" value="Eukaryota"/>
</dbReference>
<dbReference type="InParanoid" id="Q6QZN6"/>
<dbReference type="PhylomeDB" id="Q6QZN6"/>
<dbReference type="Reactome" id="R-DRE-4641258">
    <property type="pathway name" value="Degradation of DVL"/>
</dbReference>
<dbReference type="PRO" id="PR:Q6QZN6"/>
<dbReference type="Proteomes" id="UP000000437">
    <property type="component" value="Unplaced"/>
</dbReference>
<dbReference type="GO" id="GO:0005737">
    <property type="term" value="C:cytoplasm"/>
    <property type="evidence" value="ECO:0000318"/>
    <property type="project" value="GO_Central"/>
</dbReference>
<dbReference type="GO" id="GO:0090090">
    <property type="term" value="P:negative regulation of canonical Wnt signaling pathway"/>
    <property type="evidence" value="ECO:0000318"/>
    <property type="project" value="GO_Central"/>
</dbReference>
<dbReference type="GO" id="GO:0046329">
    <property type="term" value="P:negative regulation of JNK cascade"/>
    <property type="evidence" value="ECO:0000318"/>
    <property type="project" value="GO_Central"/>
</dbReference>
<dbReference type="GO" id="GO:2000095">
    <property type="term" value="P:regulation of Wnt signaling pathway, planar cell polarity pathway"/>
    <property type="evidence" value="ECO:0000318"/>
    <property type="project" value="GO_Central"/>
</dbReference>
<dbReference type="GO" id="GO:0016055">
    <property type="term" value="P:Wnt signaling pathway"/>
    <property type="evidence" value="ECO:0000315"/>
    <property type="project" value="ZFIN"/>
</dbReference>
<dbReference type="InterPro" id="IPR024843">
    <property type="entry name" value="Dapper"/>
</dbReference>
<dbReference type="PANTHER" id="PTHR15919:SF12">
    <property type="entry name" value="DAPPER HOMOLOG 1"/>
    <property type="match status" value="1"/>
</dbReference>
<dbReference type="PANTHER" id="PTHR15919">
    <property type="entry name" value="DAPPER-RELATED"/>
    <property type="match status" value="1"/>
</dbReference>
<dbReference type="Pfam" id="PF15268">
    <property type="entry name" value="Dapper"/>
    <property type="match status" value="1"/>
</dbReference>
<organism>
    <name type="scientific">Danio rerio</name>
    <name type="common">Zebrafish</name>
    <name type="synonym">Brachydanio rerio</name>
    <dbReference type="NCBI Taxonomy" id="7955"/>
    <lineage>
        <taxon>Eukaryota</taxon>
        <taxon>Metazoa</taxon>
        <taxon>Chordata</taxon>
        <taxon>Craniata</taxon>
        <taxon>Vertebrata</taxon>
        <taxon>Euteleostomi</taxon>
        <taxon>Actinopterygii</taxon>
        <taxon>Neopterygii</taxon>
        <taxon>Teleostei</taxon>
        <taxon>Ostariophysi</taxon>
        <taxon>Cypriniformes</taxon>
        <taxon>Danionidae</taxon>
        <taxon>Danioninae</taxon>
        <taxon>Danio</taxon>
    </lineage>
</organism>
<reference key="1">
    <citation type="journal article" date="2004" name="Dev. Dyn.">
        <title>Two Frodo/Dapper homologs are expressed in the developing brain and mesoderm of zebrafish.</title>
        <authorList>
            <person name="Gillhouse M."/>
            <person name="Wagner Nyholm M."/>
            <person name="Hikasa H."/>
            <person name="Sokol S.Y."/>
            <person name="Grinblat Y."/>
        </authorList>
    </citation>
    <scope>NUCLEOTIDE SEQUENCE [MRNA]</scope>
    <scope>DEVELOPMENTAL STAGE</scope>
    <source>
        <tissue>Gastrula</tissue>
    </source>
</reference>
<reference key="2">
    <citation type="journal article" date="2004" name="Development">
        <title>Zebrafish Dapper1 and Dapper2 play distinct roles in Wnt-mediated developmental processes.</title>
        <authorList>
            <person name="Waxman J.S."/>
            <person name="Hocking A.M."/>
            <person name="Stoick C.L."/>
            <person name="Moon R.T."/>
        </authorList>
    </citation>
    <scope>NUCLEOTIDE SEQUENCE [MRNA] OF 7-821</scope>
    <scope>FUNCTION</scope>
    <scope>INTERACTION WITH DVL2</scope>
    <scope>SUBCELLULAR LOCATION</scope>
    <scope>DEVELOPMENTAL STAGE</scope>
</reference>
<accession>Q6QZN6</accession>
<accession>Q673G9</accession>
<name>DACT1_DANRE</name>
<feature type="chain" id="PRO_0000191358" description="Dapper homolog 1">
    <location>
        <begin position="1"/>
        <end position="821"/>
    </location>
</feature>
<feature type="region of interest" description="Disordered" evidence="3">
    <location>
        <begin position="288"/>
        <end position="312"/>
    </location>
</feature>
<feature type="region of interest" description="Disordered" evidence="3">
    <location>
        <begin position="386"/>
        <end position="432"/>
    </location>
</feature>
<feature type="region of interest" description="Disordered" evidence="3">
    <location>
        <begin position="564"/>
        <end position="615"/>
    </location>
</feature>
<feature type="region of interest" description="Disordered" evidence="3">
    <location>
        <begin position="627"/>
        <end position="655"/>
    </location>
</feature>
<feature type="coiled-coil region" evidence="2">
    <location>
        <begin position="88"/>
        <end position="136"/>
    </location>
</feature>
<feature type="short sequence motif" description="PDZ-binding" evidence="1">
    <location>
        <begin position="818"/>
        <end position="821"/>
    </location>
</feature>
<feature type="compositionally biased region" description="Low complexity" evidence="3">
    <location>
        <begin position="388"/>
        <end position="400"/>
    </location>
</feature>
<feature type="compositionally biased region" description="Polar residues" evidence="3">
    <location>
        <begin position="401"/>
        <end position="432"/>
    </location>
</feature>
<feature type="compositionally biased region" description="Basic residues" evidence="3">
    <location>
        <begin position="584"/>
        <end position="593"/>
    </location>
</feature>
<feature type="compositionally biased region" description="Basic residues" evidence="3">
    <location>
        <begin position="601"/>
        <end position="615"/>
    </location>
</feature>
<feature type="compositionally biased region" description="Basic residues" evidence="3">
    <location>
        <begin position="639"/>
        <end position="649"/>
    </location>
</feature>
<feature type="sequence conflict" description="In Ref. 2; AAT42265." evidence="6" ref="2">
    <original>A</original>
    <variation>T</variation>
    <location>
        <position position="15"/>
    </location>
</feature>
<feature type="sequence conflict" description="In Ref. 2; AAT42265." evidence="6" ref="2">
    <original>Q</original>
    <variation>R</variation>
    <location>
        <position position="76"/>
    </location>
</feature>
<feature type="sequence conflict" description="In Ref. 2; AAT42265." evidence="6" ref="2">
    <original>S</original>
    <variation>I</variation>
    <location>
        <position position="171"/>
    </location>
</feature>
<protein>
    <recommendedName>
        <fullName>Dapper homolog 1</fullName>
    </recommendedName>
    <alternativeName>
        <fullName>Frodo 1</fullName>
    </alternativeName>
</protein>
<evidence type="ECO:0000250" key="1"/>
<evidence type="ECO:0000255" key="2"/>
<evidence type="ECO:0000256" key="3">
    <source>
        <dbReference type="SAM" id="MobiDB-lite"/>
    </source>
</evidence>
<evidence type="ECO:0000269" key="4">
    <source>
    </source>
</evidence>
<evidence type="ECO:0000269" key="5">
    <source>
    </source>
</evidence>
<evidence type="ECO:0000305" key="6"/>
<comment type="function">
    <text evidence="5">Involved in regulation of intracellular signaling pathways during development. Specifically thought to play a role in canonical and/or non-canonical Wnt signaling pathways through interaction with DSH (Dishevelled) family proteins. Binds to dvl2 and may regulate the degradation of ctnnb1/beta-catenin, thereby modulating the transcriptional activation of target genes of the Wnt signaling pathway. Seems to activate the canonical Wnt signaling pathway.</text>
</comment>
<comment type="subunit">
    <text evidence="5">Interacts with dvl2.</text>
</comment>
<comment type="subcellular location">
    <subcellularLocation>
        <location evidence="5">Cytoplasm</location>
    </subcellularLocation>
</comment>
<comment type="developmental stage">
    <text evidence="4 5">Expressed in the future mesendoderm during early gastrulation. Expressed in the prechordal plate axial mesoderm and the posterior neural plate in mid-gastrula, and in the anterior neural plate at the end of gastrulation and during somitogenesis. Strongly expressed in and the tail bud and several areas of the brain at the end of somitogenesis.</text>
</comment>
<comment type="domain">
    <text evidence="1">The C-terminal PDZ-binding motif may mediate interaction with the PDZ domains of DSH (Dishevelled) family proteins.</text>
</comment>
<comment type="similarity">
    <text evidence="6">Belongs to the dapper family.</text>
</comment>
<sequence length="821" mass="90721">MNEWSEMLVCRDYCALMMRDRKECDARCCRDGEGERVRARERLDATVAGLTELEYLRQRQELLVRSVLSCPEAAGQDKPCLTVDDSYLNTEEKLLEENILLLRKQLNCLRRRDAGLINQLQELDRQISDLRLDTETSHEHVETDSRPSSGFYDLSDGASGSLSNSSNSVFSECLSSCRSTTCLCTPLDTSLCASEGRLKPADDPGSCAECDCHCEDSSSGTVRRSLSASYSPSPDSSCDGISKFHCDLIAKNGNDVYRYPSPLHAVAVQSPIFIQSMTSHLKDDCNFSKPGEALNDEQKPEQVVGSQTSSWHASQMLPNKKLDSYIYGLLQRRAQPLRTNKPRTSINTDPSKSILRQASLCSRAPASVQAQQWTSDLKPNWQTCLQDASATSTEPSTASPQRQWSAESKGGTPQNGAYLSSSQPQNSYSTTNENTNCLLKKKVSGTSKGQLLSATPKDCPDLGSPKAVSSPKLNKHCFYNVEDNKTGQAMKASPLKRSPKTQTSLSCGKDSEQLAQELVSLGSSSQSQDEGGPLVSAQYIPAQKQNVNLQKGGTKNIKIVKVKNSASSKSRPQVFEHVSETVRDKHRTGSRRTRQVDEVHHLHKSSKKASAKTKRIPASIPEGRILERHTSSSGARSSAQRHHGHHRHHEAVLAKPKYKRNDFHRRPRGLHEIPYEEAYRRAHRRQKREMLSHMYLPSNAHYTSPYAYVGSDSEYSAECASLFHSTILDTSEDERSNYTTNCFGDSESSASEADYVAESSTSSDSEGSAGVNWRQISQAGSGSHGMTSAQAKAFVKIKASHNLKKKILRFRSGSLKLMTTV</sequence>
<gene>
    <name type="primary">dact1</name>
    <name type="synonym">dpr1</name>
    <name type="synonym">frd1</name>
</gene>
<proteinExistence type="evidence at protein level"/>
<keyword id="KW-0175">Coiled coil</keyword>
<keyword id="KW-0963">Cytoplasm</keyword>
<keyword id="KW-0217">Developmental protein</keyword>
<keyword id="KW-1185">Reference proteome</keyword>
<keyword id="KW-0879">Wnt signaling pathway</keyword>